<dbReference type="EMBL" id="CP001616">
    <property type="protein sequence ID" value="ACQ93815.1"/>
    <property type="molecule type" value="Genomic_DNA"/>
</dbReference>
<dbReference type="RefSeq" id="WP_015879283.1">
    <property type="nucleotide sequence ID" value="NC_012691.1"/>
</dbReference>
<dbReference type="SMR" id="C4L8U5"/>
<dbReference type="STRING" id="595494.Tola_2216"/>
<dbReference type="KEGG" id="tau:Tola_2216"/>
<dbReference type="eggNOG" id="COG0718">
    <property type="taxonomic scope" value="Bacteria"/>
</dbReference>
<dbReference type="HOGENOM" id="CLU_140930_0_0_6"/>
<dbReference type="OrthoDB" id="9808738at2"/>
<dbReference type="Proteomes" id="UP000009073">
    <property type="component" value="Chromosome"/>
</dbReference>
<dbReference type="GO" id="GO:0043590">
    <property type="term" value="C:bacterial nucleoid"/>
    <property type="evidence" value="ECO:0007669"/>
    <property type="project" value="UniProtKB-UniRule"/>
</dbReference>
<dbReference type="GO" id="GO:0005829">
    <property type="term" value="C:cytosol"/>
    <property type="evidence" value="ECO:0007669"/>
    <property type="project" value="TreeGrafter"/>
</dbReference>
<dbReference type="GO" id="GO:0003677">
    <property type="term" value="F:DNA binding"/>
    <property type="evidence" value="ECO:0007669"/>
    <property type="project" value="UniProtKB-UniRule"/>
</dbReference>
<dbReference type="FunFam" id="3.30.1310.10:FF:000001">
    <property type="entry name" value="Nucleoid-associated protein YbaB"/>
    <property type="match status" value="1"/>
</dbReference>
<dbReference type="Gene3D" id="3.30.1310.10">
    <property type="entry name" value="Nucleoid-associated protein YbaB-like domain"/>
    <property type="match status" value="1"/>
</dbReference>
<dbReference type="HAMAP" id="MF_00274">
    <property type="entry name" value="DNA_YbaB_EbfC"/>
    <property type="match status" value="1"/>
</dbReference>
<dbReference type="InterPro" id="IPR036894">
    <property type="entry name" value="YbaB-like_sf"/>
</dbReference>
<dbReference type="InterPro" id="IPR004401">
    <property type="entry name" value="YbaB/EbfC"/>
</dbReference>
<dbReference type="NCBIfam" id="TIGR00103">
    <property type="entry name" value="DNA_YbaB_EbfC"/>
    <property type="match status" value="1"/>
</dbReference>
<dbReference type="PANTHER" id="PTHR33449">
    <property type="entry name" value="NUCLEOID-ASSOCIATED PROTEIN YBAB"/>
    <property type="match status" value="1"/>
</dbReference>
<dbReference type="PANTHER" id="PTHR33449:SF1">
    <property type="entry name" value="NUCLEOID-ASSOCIATED PROTEIN YBAB"/>
    <property type="match status" value="1"/>
</dbReference>
<dbReference type="Pfam" id="PF02575">
    <property type="entry name" value="YbaB_DNA_bd"/>
    <property type="match status" value="1"/>
</dbReference>
<dbReference type="PIRSF" id="PIRSF004555">
    <property type="entry name" value="UCP004555"/>
    <property type="match status" value="1"/>
</dbReference>
<dbReference type="SUPFAM" id="SSF82607">
    <property type="entry name" value="YbaB-like"/>
    <property type="match status" value="1"/>
</dbReference>
<reference key="1">
    <citation type="submission" date="2009-05" db="EMBL/GenBank/DDBJ databases">
        <title>Complete sequence of Tolumonas auensis DSM 9187.</title>
        <authorList>
            <consortium name="US DOE Joint Genome Institute"/>
            <person name="Lucas S."/>
            <person name="Copeland A."/>
            <person name="Lapidus A."/>
            <person name="Glavina del Rio T."/>
            <person name="Tice H."/>
            <person name="Bruce D."/>
            <person name="Goodwin L."/>
            <person name="Pitluck S."/>
            <person name="Chertkov O."/>
            <person name="Brettin T."/>
            <person name="Detter J.C."/>
            <person name="Han C."/>
            <person name="Larimer F."/>
            <person name="Land M."/>
            <person name="Hauser L."/>
            <person name="Kyrpides N."/>
            <person name="Mikhailova N."/>
            <person name="Spring S."/>
            <person name="Beller H."/>
        </authorList>
    </citation>
    <scope>NUCLEOTIDE SEQUENCE [LARGE SCALE GENOMIC DNA]</scope>
    <source>
        <strain>DSM 9187 / NBRC 110442 / TA 4</strain>
    </source>
</reference>
<protein>
    <recommendedName>
        <fullName evidence="1">Nucleoid-associated protein Tola_2216</fullName>
    </recommendedName>
</protein>
<evidence type="ECO:0000255" key="1">
    <source>
        <dbReference type="HAMAP-Rule" id="MF_00274"/>
    </source>
</evidence>
<sequence length="110" mass="12180">MFGKGGMGNLMKQAQMMQERMQKMQEEVAKMEVTGESGAGMVKITITGSHNVRRVTIDPSLLQDDDQEMLEDLIAAAFNDAVRRAEEQNKAKMAEITGGMQLPPGFKMPF</sequence>
<feature type="chain" id="PRO_1000204782" description="Nucleoid-associated protein Tola_2216">
    <location>
        <begin position="1"/>
        <end position="110"/>
    </location>
</feature>
<name>Y2216_TOLAT</name>
<gene>
    <name type="ordered locus">Tola_2216</name>
</gene>
<proteinExistence type="inferred from homology"/>
<comment type="function">
    <text evidence="1">Binds to DNA and alters its conformation. May be involved in regulation of gene expression, nucleoid organization and DNA protection.</text>
</comment>
<comment type="subunit">
    <text evidence="1">Homodimer.</text>
</comment>
<comment type="subcellular location">
    <subcellularLocation>
        <location evidence="1">Cytoplasm</location>
        <location evidence="1">Nucleoid</location>
    </subcellularLocation>
</comment>
<comment type="similarity">
    <text evidence="1">Belongs to the YbaB/EbfC family.</text>
</comment>
<organism>
    <name type="scientific">Tolumonas auensis (strain DSM 9187 / NBRC 110442 / TA 4)</name>
    <dbReference type="NCBI Taxonomy" id="595494"/>
    <lineage>
        <taxon>Bacteria</taxon>
        <taxon>Pseudomonadati</taxon>
        <taxon>Pseudomonadota</taxon>
        <taxon>Gammaproteobacteria</taxon>
        <taxon>Aeromonadales</taxon>
        <taxon>Aeromonadaceae</taxon>
        <taxon>Tolumonas</taxon>
    </lineage>
</organism>
<accession>C4L8U5</accession>
<keyword id="KW-0963">Cytoplasm</keyword>
<keyword id="KW-0238">DNA-binding</keyword>
<keyword id="KW-1185">Reference proteome</keyword>